<dbReference type="EMBL" id="AF284094">
    <property type="protein sequence ID" value="AAL54382.1"/>
    <property type="molecule type" value="mRNA"/>
</dbReference>
<dbReference type="EMBL" id="AC093719">
    <property type="status" value="NOT_ANNOTATED_CDS"/>
    <property type="molecule type" value="Genomic_DNA"/>
</dbReference>
<dbReference type="EMBL" id="AC122688">
    <property type="status" value="NOT_ANNOTATED_CDS"/>
    <property type="molecule type" value="Genomic_DNA"/>
</dbReference>
<dbReference type="EMBL" id="BC034525">
    <property type="protein sequence ID" value="AAH34525.1"/>
    <property type="molecule type" value="mRNA"/>
</dbReference>
<dbReference type="EMBL" id="AF283671">
    <property type="protein sequence ID" value="AAL33003.2"/>
    <property type="status" value="ALT_FRAME"/>
    <property type="molecule type" value="mRNA"/>
</dbReference>
<dbReference type="CCDS" id="CCDS9262.1"/>
<dbReference type="RefSeq" id="NP_542193.3">
    <property type="nucleotide sequence ID" value="NM_080626.5"/>
</dbReference>
<dbReference type="SMR" id="Q8WY22"/>
<dbReference type="BioGRID" id="126665">
    <property type="interactions" value="163"/>
</dbReference>
<dbReference type="FunCoup" id="Q8WY22">
    <property type="interactions" value="921"/>
</dbReference>
<dbReference type="IntAct" id="Q8WY22">
    <property type="interactions" value="82"/>
</dbReference>
<dbReference type="MINT" id="Q8WY22"/>
<dbReference type="TCDB" id="1.A.74.2.2">
    <property type="family name" value="the mitsugumin 23 (mg23) family"/>
</dbReference>
<dbReference type="iPTMnet" id="Q8WY22"/>
<dbReference type="PhosphoSitePlus" id="Q8WY22"/>
<dbReference type="SwissPalm" id="Q8WY22"/>
<dbReference type="BioMuta" id="BRI3BP"/>
<dbReference type="DMDM" id="74730999"/>
<dbReference type="jPOST" id="Q8WY22"/>
<dbReference type="MassIVE" id="Q8WY22"/>
<dbReference type="PaxDb" id="9606-ENSP00000340761"/>
<dbReference type="PeptideAtlas" id="Q8WY22"/>
<dbReference type="ProteomicsDB" id="75123"/>
<dbReference type="Pumba" id="Q8WY22"/>
<dbReference type="TopDownProteomics" id="Q8WY22"/>
<dbReference type="Antibodypedia" id="2692">
    <property type="antibodies" value="162 antibodies from 28 providers"/>
</dbReference>
<dbReference type="DNASU" id="140707"/>
<dbReference type="Ensembl" id="ENST00000341446.9">
    <property type="protein sequence ID" value="ENSP00000340761.7"/>
    <property type="gene ID" value="ENSG00000184992.13"/>
</dbReference>
<dbReference type="Ensembl" id="ENST00000672415.1">
    <property type="protein sequence ID" value="ENSP00000500359.1"/>
    <property type="gene ID" value="ENSG00000184992.13"/>
</dbReference>
<dbReference type="GeneID" id="140707"/>
<dbReference type="KEGG" id="hsa:140707"/>
<dbReference type="MANE-Select" id="ENST00000341446.9">
    <property type="protein sequence ID" value="ENSP00000340761.7"/>
    <property type="RefSeq nucleotide sequence ID" value="NM_080626.6"/>
    <property type="RefSeq protein sequence ID" value="NP_542193.3"/>
</dbReference>
<dbReference type="UCSC" id="uc001uha.2">
    <property type="organism name" value="human"/>
</dbReference>
<dbReference type="AGR" id="HGNC:14251"/>
<dbReference type="CTD" id="140707"/>
<dbReference type="DisGeNET" id="140707"/>
<dbReference type="GeneCards" id="BRI3BP"/>
<dbReference type="HGNC" id="HGNC:14251">
    <property type="gene designation" value="BRI3BP"/>
</dbReference>
<dbReference type="HPA" id="ENSG00000184992">
    <property type="expression patterns" value="Tissue enhanced (intestine)"/>
</dbReference>
<dbReference type="MIM" id="615627">
    <property type="type" value="gene"/>
</dbReference>
<dbReference type="neXtProt" id="NX_Q8WY22"/>
<dbReference type="OpenTargets" id="ENSG00000184992"/>
<dbReference type="PharmGKB" id="PA25423"/>
<dbReference type="VEuPathDB" id="HostDB:ENSG00000184992"/>
<dbReference type="eggNOG" id="ENOG502QRNV">
    <property type="taxonomic scope" value="Eukaryota"/>
</dbReference>
<dbReference type="GeneTree" id="ENSGT00390000002024"/>
<dbReference type="HOGENOM" id="CLU_095006_0_0_1"/>
<dbReference type="InParanoid" id="Q8WY22"/>
<dbReference type="OMA" id="LMDTFWR"/>
<dbReference type="OrthoDB" id="9889463at2759"/>
<dbReference type="PAN-GO" id="Q8WY22">
    <property type="GO annotations" value="1 GO annotation based on evolutionary models"/>
</dbReference>
<dbReference type="PhylomeDB" id="Q8WY22"/>
<dbReference type="TreeFam" id="TF332238"/>
<dbReference type="PathwayCommons" id="Q8WY22"/>
<dbReference type="SignaLink" id="Q8WY22"/>
<dbReference type="BioGRID-ORCS" id="140707">
    <property type="hits" value="22 hits in 1156 CRISPR screens"/>
</dbReference>
<dbReference type="ChiTaRS" id="BRI3BP">
    <property type="organism name" value="human"/>
</dbReference>
<dbReference type="GenomeRNAi" id="140707"/>
<dbReference type="Pharos" id="Q8WY22">
    <property type="development level" value="Tbio"/>
</dbReference>
<dbReference type="PRO" id="PR:Q8WY22"/>
<dbReference type="Proteomes" id="UP000005640">
    <property type="component" value="Chromosome 12"/>
</dbReference>
<dbReference type="RNAct" id="Q8WY22">
    <property type="molecule type" value="protein"/>
</dbReference>
<dbReference type="Bgee" id="ENSG00000184992">
    <property type="expression patterns" value="Expressed in ileal mucosa and 192 other cell types or tissues"/>
</dbReference>
<dbReference type="ExpressionAtlas" id="Q8WY22">
    <property type="expression patterns" value="baseline and differential"/>
</dbReference>
<dbReference type="GO" id="GO:0005741">
    <property type="term" value="C:mitochondrial outer membrane"/>
    <property type="evidence" value="ECO:0007669"/>
    <property type="project" value="UniProtKB-SubCell"/>
</dbReference>
<dbReference type="GO" id="GO:0005739">
    <property type="term" value="C:mitochondrion"/>
    <property type="evidence" value="ECO:0000314"/>
    <property type="project" value="UniProtKB"/>
</dbReference>
<dbReference type="InterPro" id="IPR033367">
    <property type="entry name" value="BRI3BP"/>
</dbReference>
<dbReference type="PANTHER" id="PTHR31253">
    <property type="entry name" value="BRI3-BINDING PROTEIN"/>
    <property type="match status" value="1"/>
</dbReference>
<dbReference type="PANTHER" id="PTHR31253:SF0">
    <property type="entry name" value="BRI3-BINDING PROTEIN"/>
    <property type="match status" value="1"/>
</dbReference>
<dbReference type="Pfam" id="PF14965">
    <property type="entry name" value="BRI3BP"/>
    <property type="match status" value="1"/>
</dbReference>
<evidence type="ECO:0000255" key="1"/>
<evidence type="ECO:0000269" key="2">
    <source>
    </source>
</evidence>
<evidence type="ECO:0000269" key="3">
    <source>
    </source>
</evidence>
<evidence type="ECO:0000269" key="4">
    <source>
    </source>
</evidence>
<evidence type="ECO:0000269" key="5">
    <source>
    </source>
</evidence>
<evidence type="ECO:0000305" key="6"/>
<evidence type="ECO:0000305" key="7">
    <source>
    </source>
</evidence>
<evidence type="ECO:0000312" key="8">
    <source>
        <dbReference type="EMBL" id="AAH34525.1"/>
    </source>
</evidence>
<evidence type="ECO:0000312" key="9">
    <source>
        <dbReference type="EMBL" id="AAL33003.2"/>
    </source>
</evidence>
<evidence type="ECO:0000312" key="10">
    <source>
        <dbReference type="EMBL" id="AAL54382.1"/>
    </source>
</evidence>
<evidence type="ECO:0007744" key="11">
    <source>
    </source>
</evidence>
<evidence type="ECO:0007744" key="12">
    <source>
    </source>
</evidence>
<accession>Q8WY22</accession>
<accession>Q8WY23</accession>
<reference evidence="6 10" key="1">
    <citation type="journal article" date="2001" name="Biochem. Genet.">
        <title>Cloning, tissue expression pattern, and chromosome location of a novel human gene BRI3BP.</title>
        <authorList>
            <person name="Lin L."/>
            <person name="Wu Y."/>
            <person name="Li C."/>
            <person name="Zhao S."/>
        </authorList>
    </citation>
    <scope>NUCLEOTIDE SEQUENCE [MRNA]</scope>
    <scope>TISSUE SPECIFICITY</scope>
    <scope>INTERACTION WITH BRI3</scope>
    <source>
        <tissue evidence="10">Fetal brain</tissue>
    </source>
</reference>
<reference key="2">
    <citation type="journal article" date="2006" name="Nature">
        <title>The finished DNA sequence of human chromosome 12.</title>
        <authorList>
            <person name="Scherer S.E."/>
            <person name="Muzny D.M."/>
            <person name="Buhay C.J."/>
            <person name="Chen R."/>
            <person name="Cree A."/>
            <person name="Ding Y."/>
            <person name="Dugan-Rocha S."/>
            <person name="Gill R."/>
            <person name="Gunaratne P."/>
            <person name="Harris R.A."/>
            <person name="Hawes A.C."/>
            <person name="Hernandez J."/>
            <person name="Hodgson A.V."/>
            <person name="Hume J."/>
            <person name="Jackson A."/>
            <person name="Khan Z.M."/>
            <person name="Kovar-Smith C."/>
            <person name="Lewis L.R."/>
            <person name="Lozado R.J."/>
            <person name="Metzker M.L."/>
            <person name="Milosavljevic A."/>
            <person name="Miner G.R."/>
            <person name="Montgomery K.T."/>
            <person name="Morgan M.B."/>
            <person name="Nazareth L.V."/>
            <person name="Scott G."/>
            <person name="Sodergren E."/>
            <person name="Song X.-Z."/>
            <person name="Steffen D."/>
            <person name="Lovering R.C."/>
            <person name="Wheeler D.A."/>
            <person name="Worley K.C."/>
            <person name="Yuan Y."/>
            <person name="Zhang Z."/>
            <person name="Adams C.Q."/>
            <person name="Ansari-Lari M.A."/>
            <person name="Ayele M."/>
            <person name="Brown M.J."/>
            <person name="Chen G."/>
            <person name="Chen Z."/>
            <person name="Clerc-Blankenburg K.P."/>
            <person name="Davis C."/>
            <person name="Delgado O."/>
            <person name="Dinh H.H."/>
            <person name="Draper H."/>
            <person name="Gonzalez-Garay M.L."/>
            <person name="Havlak P."/>
            <person name="Jackson L.R."/>
            <person name="Jacob L.S."/>
            <person name="Kelly S.H."/>
            <person name="Li L."/>
            <person name="Li Z."/>
            <person name="Liu J."/>
            <person name="Liu W."/>
            <person name="Lu J."/>
            <person name="Maheshwari M."/>
            <person name="Nguyen B.-V."/>
            <person name="Okwuonu G.O."/>
            <person name="Pasternak S."/>
            <person name="Perez L.M."/>
            <person name="Plopper F.J.H."/>
            <person name="Santibanez J."/>
            <person name="Shen H."/>
            <person name="Tabor P.E."/>
            <person name="Verduzco D."/>
            <person name="Waldron L."/>
            <person name="Wang Q."/>
            <person name="Williams G.A."/>
            <person name="Zhang J."/>
            <person name="Zhou J."/>
            <person name="Allen C.C."/>
            <person name="Amin A.G."/>
            <person name="Anyalebechi V."/>
            <person name="Bailey M."/>
            <person name="Barbaria J.A."/>
            <person name="Bimage K.E."/>
            <person name="Bryant N.P."/>
            <person name="Burch P.E."/>
            <person name="Burkett C.E."/>
            <person name="Burrell K.L."/>
            <person name="Calderon E."/>
            <person name="Cardenas V."/>
            <person name="Carter K."/>
            <person name="Casias K."/>
            <person name="Cavazos I."/>
            <person name="Cavazos S.R."/>
            <person name="Ceasar H."/>
            <person name="Chacko J."/>
            <person name="Chan S.N."/>
            <person name="Chavez D."/>
            <person name="Christopoulos C."/>
            <person name="Chu J."/>
            <person name="Cockrell R."/>
            <person name="Cox C.D."/>
            <person name="Dang M."/>
            <person name="Dathorne S.R."/>
            <person name="David R."/>
            <person name="Davis C.M."/>
            <person name="Davy-Carroll L."/>
            <person name="Deshazo D.R."/>
            <person name="Donlin J.E."/>
            <person name="D'Souza L."/>
            <person name="Eaves K.A."/>
            <person name="Egan A."/>
            <person name="Emery-Cohen A.J."/>
            <person name="Escotto M."/>
            <person name="Flagg N."/>
            <person name="Forbes L.D."/>
            <person name="Gabisi A.M."/>
            <person name="Garza M."/>
            <person name="Hamilton C."/>
            <person name="Henderson N."/>
            <person name="Hernandez O."/>
            <person name="Hines S."/>
            <person name="Hogues M.E."/>
            <person name="Huang M."/>
            <person name="Idlebird D.G."/>
            <person name="Johnson R."/>
            <person name="Jolivet A."/>
            <person name="Jones S."/>
            <person name="Kagan R."/>
            <person name="King L.M."/>
            <person name="Leal B."/>
            <person name="Lebow H."/>
            <person name="Lee S."/>
            <person name="LeVan J.M."/>
            <person name="Lewis L.C."/>
            <person name="London P."/>
            <person name="Lorensuhewa L.M."/>
            <person name="Loulseged H."/>
            <person name="Lovett D.A."/>
            <person name="Lucier A."/>
            <person name="Lucier R.L."/>
            <person name="Ma J."/>
            <person name="Madu R.C."/>
            <person name="Mapua P."/>
            <person name="Martindale A.D."/>
            <person name="Martinez E."/>
            <person name="Massey E."/>
            <person name="Mawhiney S."/>
            <person name="Meador M.G."/>
            <person name="Mendez S."/>
            <person name="Mercado C."/>
            <person name="Mercado I.C."/>
            <person name="Merritt C.E."/>
            <person name="Miner Z.L."/>
            <person name="Minja E."/>
            <person name="Mitchell T."/>
            <person name="Mohabbat F."/>
            <person name="Mohabbat K."/>
            <person name="Montgomery B."/>
            <person name="Moore N."/>
            <person name="Morris S."/>
            <person name="Munidasa M."/>
            <person name="Ngo R.N."/>
            <person name="Nguyen N.B."/>
            <person name="Nickerson E."/>
            <person name="Nwaokelemeh O.O."/>
            <person name="Nwokenkwo S."/>
            <person name="Obregon M."/>
            <person name="Oguh M."/>
            <person name="Oragunye N."/>
            <person name="Oviedo R.J."/>
            <person name="Parish B.J."/>
            <person name="Parker D.N."/>
            <person name="Parrish J."/>
            <person name="Parks K.L."/>
            <person name="Paul H.A."/>
            <person name="Payton B.A."/>
            <person name="Perez A."/>
            <person name="Perrin W."/>
            <person name="Pickens A."/>
            <person name="Primus E.L."/>
            <person name="Pu L.-L."/>
            <person name="Puazo M."/>
            <person name="Quiles M.M."/>
            <person name="Quiroz J.B."/>
            <person name="Rabata D."/>
            <person name="Reeves K."/>
            <person name="Ruiz S.J."/>
            <person name="Shao H."/>
            <person name="Sisson I."/>
            <person name="Sonaike T."/>
            <person name="Sorelle R.P."/>
            <person name="Sutton A.E."/>
            <person name="Svatek A.F."/>
            <person name="Svetz L.A."/>
            <person name="Tamerisa K.S."/>
            <person name="Taylor T.R."/>
            <person name="Teague B."/>
            <person name="Thomas N."/>
            <person name="Thorn R.D."/>
            <person name="Trejos Z.Y."/>
            <person name="Trevino B.K."/>
            <person name="Ukegbu O.N."/>
            <person name="Urban J.B."/>
            <person name="Vasquez L.I."/>
            <person name="Vera V.A."/>
            <person name="Villasana D.M."/>
            <person name="Wang L."/>
            <person name="Ward-Moore S."/>
            <person name="Warren J.T."/>
            <person name="Wei X."/>
            <person name="White F."/>
            <person name="Williamson A.L."/>
            <person name="Wleczyk R."/>
            <person name="Wooden H.S."/>
            <person name="Wooden S.H."/>
            <person name="Yen J."/>
            <person name="Yoon L."/>
            <person name="Yoon V."/>
            <person name="Zorrilla S.E."/>
            <person name="Nelson D."/>
            <person name="Kucherlapati R."/>
            <person name="Weinstock G."/>
            <person name="Gibbs R.A."/>
        </authorList>
    </citation>
    <scope>NUCLEOTIDE SEQUENCE [LARGE SCALE GENOMIC DNA]</scope>
</reference>
<reference evidence="8" key="3">
    <citation type="journal article" date="2004" name="Genome Res.">
        <title>The status, quality, and expansion of the NIH full-length cDNA project: the Mammalian Gene Collection (MGC).</title>
        <authorList>
            <consortium name="The MGC Project Team"/>
        </authorList>
    </citation>
    <scope>NUCLEOTIDE SEQUENCE [LARGE SCALE MRNA]</scope>
    <source>
        <tissue evidence="8">Skin</tissue>
    </source>
</reference>
<reference evidence="6 9" key="4">
    <citation type="submission" date="2002-02" db="EMBL/GenBank/DDBJ databases">
        <title>Homo sapiens cervical cancer 1 (HCCR-1) proto-oncogene binding protein, KG-19.</title>
        <authorList>
            <person name="Kim J.W."/>
        </authorList>
    </citation>
    <scope>NUCLEOTIDE SEQUENCE [MRNA] OF 41-251</scope>
</reference>
<reference key="5">
    <citation type="journal article" date="2008" name="Int. J. Cancer">
        <title>HCCRBP-1 directly interacting with HCCR-1 induces tumorigenesis through P53 stabilization.</title>
        <authorList>
            <person name="Ha S.A."/>
            <person name="Shin S.M."/>
            <person name="Lee Y.J."/>
            <person name="Kim S."/>
            <person name="Kim H.K."/>
            <person name="Namkoong H."/>
            <person name="Lee H."/>
            <person name="Lee Y.S."/>
            <person name="Cho Y.S."/>
            <person name="Park Y.G."/>
            <person name="Jeon H.M."/>
            <person name="Oh C."/>
            <person name="Kim J.W."/>
        </authorList>
    </citation>
    <scope>FUNCTION</scope>
    <scope>SUBCELLULAR LOCATION</scope>
    <scope>TISSUE SPECIFICITY</scope>
    <scope>PROTO-ONCOGENICITY</scope>
    <scope>INTERACTION WITH LETMD1</scope>
</reference>
<reference key="6">
    <citation type="journal article" date="2009" name="Science">
        <title>Lysine acetylation targets protein complexes and co-regulates major cellular functions.</title>
        <authorList>
            <person name="Choudhary C."/>
            <person name="Kumar C."/>
            <person name="Gnad F."/>
            <person name="Nielsen M.L."/>
            <person name="Rehman M."/>
            <person name="Walther T.C."/>
            <person name="Olsen J.V."/>
            <person name="Mann M."/>
        </authorList>
    </citation>
    <scope>ACETYLATION [LARGE SCALE ANALYSIS] AT LYS-229</scope>
    <scope>IDENTIFICATION BY MASS SPECTROMETRY [LARGE SCALE ANALYSIS]</scope>
</reference>
<reference key="7">
    <citation type="journal article" date="2011" name="BMC Syst. Biol.">
        <title>Initial characterization of the human central proteome.</title>
        <authorList>
            <person name="Burkard T.R."/>
            <person name="Planyavsky M."/>
            <person name="Kaupe I."/>
            <person name="Breitwieser F.P."/>
            <person name="Buerckstuemmer T."/>
            <person name="Bennett K.L."/>
            <person name="Superti-Furga G."/>
            <person name="Colinge J."/>
        </authorList>
    </citation>
    <scope>IDENTIFICATION BY MASS SPECTROMETRY [LARGE SCALE ANALYSIS]</scope>
</reference>
<reference key="8">
    <citation type="journal article" date="2013" name="J. Proteome Res.">
        <title>Toward a comprehensive characterization of a human cancer cell phosphoproteome.</title>
        <authorList>
            <person name="Zhou H."/>
            <person name="Di Palma S."/>
            <person name="Preisinger C."/>
            <person name="Peng M."/>
            <person name="Polat A.N."/>
            <person name="Heck A.J."/>
            <person name="Mohammed S."/>
        </authorList>
    </citation>
    <scope>PHOSPHORYLATION [LARGE SCALE ANALYSIS] AT SER-248</scope>
    <scope>IDENTIFICATION BY MASS SPECTROMETRY [LARGE SCALE ANALYSIS]</scope>
    <source>
        <tissue>Cervix carcinoma</tissue>
    </source>
</reference>
<reference key="9">
    <citation type="journal article" date="2018" name="Turk. J. Biol.">
        <title>Identification of IFITM3 and MGAT1 as novel interaction partners of BRI3 by yeast two-hybrid screening.</title>
        <authorList>
            <person name="Akiva I."/>
            <person name="Birguel Iyison N."/>
        </authorList>
    </citation>
    <scope>INTERACTION WITH BRI3</scope>
</reference>
<reference key="10">
    <citation type="journal article" date="2020" name="Elife">
        <title>A small protein encoded by a putative lncRNA regulates apoptosis and tumorigenicity in human colorectal cancer cells.</title>
        <authorList>
            <person name="Li X.L."/>
            <person name="Pongor L."/>
            <person name="Tang W."/>
            <person name="Das S."/>
            <person name="Muys B.R."/>
            <person name="Jones M.F."/>
            <person name="Lazar S.B."/>
            <person name="Dangelmaier E.A."/>
            <person name="Hartford C.C."/>
            <person name="Grammatikakis I."/>
            <person name="Hao Q."/>
            <person name="Sun Q."/>
            <person name="Schetter A."/>
            <person name="Martindale J.L."/>
            <person name="Tang B."/>
            <person name="Jenkins L.M."/>
            <person name="Robles A.I."/>
            <person name="Walker R.L."/>
            <person name="Ambs S."/>
            <person name="Chari R."/>
            <person name="Shabalina S.A."/>
            <person name="Gorospe M."/>
            <person name="Hussain S.P."/>
            <person name="Harris C.C."/>
            <person name="Meltzer P.S."/>
            <person name="Prasanth K.V."/>
            <person name="Aladjem M.I."/>
            <person name="Andresson T."/>
            <person name="Lal A."/>
        </authorList>
    </citation>
    <scope>INTERACTION WITH TMEM238L</scope>
</reference>
<name>BRI3B_HUMAN</name>
<organism>
    <name type="scientific">Homo sapiens</name>
    <name type="common">Human</name>
    <dbReference type="NCBI Taxonomy" id="9606"/>
    <lineage>
        <taxon>Eukaryota</taxon>
        <taxon>Metazoa</taxon>
        <taxon>Chordata</taxon>
        <taxon>Craniata</taxon>
        <taxon>Vertebrata</taxon>
        <taxon>Euteleostomi</taxon>
        <taxon>Mammalia</taxon>
        <taxon>Eutheria</taxon>
        <taxon>Euarchontoglires</taxon>
        <taxon>Primates</taxon>
        <taxon>Haplorrhini</taxon>
        <taxon>Catarrhini</taxon>
        <taxon>Hominidae</taxon>
        <taxon>Homo</taxon>
    </lineage>
</organism>
<feature type="chain" id="PRO_0000229747" description="BRI3-binding protein">
    <location>
        <begin position="1"/>
        <end position="251"/>
    </location>
</feature>
<feature type="transmembrane region" description="Helical" evidence="1">
    <location>
        <begin position="13"/>
        <end position="33"/>
    </location>
</feature>
<feature type="transmembrane region" description="Helical" evidence="1">
    <location>
        <begin position="125"/>
        <end position="145"/>
    </location>
</feature>
<feature type="transmembrane region" description="Helical" evidence="1">
    <location>
        <begin position="146"/>
        <end position="166"/>
    </location>
</feature>
<feature type="transmembrane region" description="Helical" evidence="1">
    <location>
        <begin position="185"/>
        <end position="205"/>
    </location>
</feature>
<feature type="coiled-coil region" evidence="1">
    <location>
        <begin position="217"/>
        <end position="247"/>
    </location>
</feature>
<feature type="modified residue" description="N6-acetyllysine" evidence="11">
    <location>
        <position position="229"/>
    </location>
</feature>
<feature type="modified residue" description="Phosphoserine" evidence="12">
    <location>
        <position position="248"/>
    </location>
</feature>
<feature type="sequence conflict" description="In Ref. 4; AAL33003." evidence="6" ref="4">
    <original>F</original>
    <variation>S</variation>
    <location>
        <position position="87"/>
    </location>
</feature>
<keyword id="KW-0007">Acetylation</keyword>
<keyword id="KW-0175">Coiled coil</keyword>
<keyword id="KW-0472">Membrane</keyword>
<keyword id="KW-0496">Mitochondrion</keyword>
<keyword id="KW-1000">Mitochondrion outer membrane</keyword>
<keyword id="KW-0597">Phosphoprotein</keyword>
<keyword id="KW-1267">Proteomics identification</keyword>
<keyword id="KW-0656">Proto-oncogene</keyword>
<keyword id="KW-1185">Reference proteome</keyword>
<keyword id="KW-0812">Transmembrane</keyword>
<keyword id="KW-1133">Transmembrane helix</keyword>
<protein>
    <recommendedName>
        <fullName evidence="6">BRI3-binding protein</fullName>
        <shortName>I3-binding protein</shortName>
    </recommendedName>
    <alternativeName>
        <fullName>Cervical cancer 1 proto-oncogene-binding protein KG19</fullName>
    </alternativeName>
    <alternativeName>
        <fullName>HCCRBP-1</fullName>
    </alternativeName>
</protein>
<comment type="function">
    <text evidence="3">Involved in tumorigenesis and may function by stabilizing p53/TP53.</text>
</comment>
<comment type="subunit">
    <text evidence="2 3 4 5">Interacts with LETMD1 (PubMed:17943721). Interacts with BRI3 (isoforms 1 and 2); the interaction with isoform 2 is weaker than with isoform 1 (PubMed:11860200, PubMed:30983867). Interacts with BRI3; the interaction is weak (PubMed:30983867). Interacts with TMEM238L (PubMed:33112233).</text>
</comment>
<comment type="interaction">
    <interactant intactId="EBI-359348">
        <id>Q8WY22</id>
    </interactant>
    <interactant intactId="EBI-2874789">
        <id>O95415</id>
        <label>BRI3</label>
    </interactant>
    <organismsDiffer>false</organismsDiffer>
    <experiments>3</experiments>
</comment>
<comment type="interaction">
    <interactant intactId="EBI-359348">
        <id>Q8WY22</id>
    </interactant>
    <interactant intactId="EBI-1549822">
        <id>Q6P1Q0</id>
        <label>LETMD1</label>
    </interactant>
    <organismsDiffer>false</organismsDiffer>
    <experiments>4</experiments>
</comment>
<comment type="interaction">
    <interactant intactId="EBI-359348">
        <id>Q8WY22</id>
    </interactant>
    <interactant intactId="EBI-40200763">
        <id>A6NJY4</id>
        <label>TMEM238L</label>
    </interactant>
    <organismsDiffer>false</organismsDiffer>
    <experiments>2</experiments>
</comment>
<comment type="subcellular location">
    <subcellularLocation>
        <location evidence="7">Mitochondrion outer membrane</location>
        <topology evidence="7">Multi-pass membrane protein</topology>
    </subcellularLocation>
</comment>
<comment type="tissue specificity">
    <text evidence="2 3">Most abundantly expressed in brain, liver and kidney (PubMed:11860200). Overexpressed in leukemia and lymphoma cell lines, as well as in various carcinomas (PubMed:17943721).</text>
</comment>
<comment type="sequence caution" evidence="6">
    <conflict type="frameshift">
        <sequence resource="EMBL-CDS" id="AAL33003"/>
    </conflict>
</comment>
<gene>
    <name evidence="10" type="primary">BRI3BP</name>
    <name evidence="9" type="synonym">KG19</name>
</gene>
<sequence>MGARASGGPLARAGLLLLLLLLLLLGLLAPGAQGARGRGGAEKNSYRRTVNTFSQSVSSLFGEDNVRAAQKFLARLTERFVLGVDMFVETLWKVWTELLDVLGLDVSNLSQYFSPASVSSSPARALLLVGVVLLAYWFLSLTLGFTFSVLHVVFGRFFWIVRVVLFSMSCVYILHKYEGEPENAVLPLCFVVAVYFMTGPMGFYWRSSPSGPSNPSNPSVEEKLEHLEKQVRLLNIRLNRVLESLDRSKDK</sequence>
<proteinExistence type="evidence at protein level"/>